<accession>P52471</accession>
<name>UL92_HHV7J</name>
<dbReference type="EMBL" id="U43400">
    <property type="protein sequence ID" value="AAC54725.1"/>
    <property type="molecule type" value="Genomic_DNA"/>
</dbReference>
<dbReference type="PIR" id="T41965">
    <property type="entry name" value="T41965"/>
</dbReference>
<dbReference type="RefSeq" id="YP_073804.1">
    <property type="nucleotide sequence ID" value="NC_001716.2"/>
</dbReference>
<dbReference type="SMR" id="P52471"/>
<dbReference type="DNASU" id="3289521"/>
<dbReference type="GeneID" id="3289521"/>
<dbReference type="KEGG" id="vg:3289521"/>
<dbReference type="Proteomes" id="UP000009246">
    <property type="component" value="Segment"/>
</dbReference>
<dbReference type="InterPro" id="IPR004289">
    <property type="entry name" value="Herpes_UL92"/>
</dbReference>
<dbReference type="Pfam" id="PF03048">
    <property type="entry name" value="Herpes_UL92"/>
    <property type="match status" value="1"/>
</dbReference>
<organism>
    <name type="scientific">Human herpesvirus 7 (strain JI)</name>
    <name type="common">HHV-7</name>
    <name type="synonym">Human T lymphotropic virus</name>
    <dbReference type="NCBI Taxonomy" id="57278"/>
    <lineage>
        <taxon>Viruses</taxon>
        <taxon>Duplodnaviria</taxon>
        <taxon>Heunggongvirae</taxon>
        <taxon>Peploviricota</taxon>
        <taxon>Herviviricetes</taxon>
        <taxon>Herpesvirales</taxon>
        <taxon>Orthoherpesviridae</taxon>
        <taxon>Betaherpesvirinae</taxon>
        <taxon>Roseolovirus</taxon>
        <taxon>Roseolovirus humanbeta7</taxon>
        <taxon>Human betaherpesvirus 7</taxon>
    </lineage>
</organism>
<protein>
    <recommendedName>
        <fullName>Protein U63</fullName>
    </recommendedName>
</protein>
<reference key="1">
    <citation type="journal article" date="1996" name="J. Virol.">
        <title>Determination and analysis of the complete nucleotide sequence of human herpesvirus.</title>
        <authorList>
            <person name="Nicholas J."/>
        </authorList>
    </citation>
    <scope>NUCLEOTIDE SEQUENCE [LARGE SCALE GENOMIC DNA]</scope>
</reference>
<keyword id="KW-1185">Reference proteome</keyword>
<proteinExistence type="inferred from homology"/>
<comment type="similarity">
    <text evidence="1">Belongs to the herpesviridae UL92 family.</text>
</comment>
<organismHost>
    <name type="scientific">Homo sapiens</name>
    <name type="common">Human</name>
    <dbReference type="NCBI Taxonomy" id="9606"/>
</organismHost>
<evidence type="ECO:0000305" key="1"/>
<sequence>MNKKKMDLPKCQSITVACEGECSQMYNLHNPLTFEMGLGNIFICVRCFKIHFCNMLEDCNLINTHEGCVCSKTGLFYNGWMPAYSHTCMEPTEEPNMETVNVVVVLLSYVYSFLIQNKARYSNIIRDIIKDGKFIEQVENAVFCTFNKVFKNSTLNKLPLTTVSQLFVQLIIGGHAEGTIYDNNVIRVSRRKREDNILKKMRIEYGNALAL</sequence>
<feature type="chain" id="PRO_0000116240" description="Protein U63">
    <location>
        <begin position="1"/>
        <end position="211"/>
    </location>
</feature>
<gene>
    <name type="primary">U63</name>
</gene>